<dbReference type="EC" id="2.7.7.7" evidence="1"/>
<dbReference type="EMBL" id="BA000040">
    <property type="protein sequence ID" value="BAC48291.1"/>
    <property type="molecule type" value="Genomic_DNA"/>
</dbReference>
<dbReference type="RefSeq" id="NP_769666.1">
    <property type="nucleotide sequence ID" value="NC_004463.1"/>
</dbReference>
<dbReference type="RefSeq" id="WP_011085810.1">
    <property type="nucleotide sequence ID" value="NC_004463.1"/>
</dbReference>
<dbReference type="SMR" id="Q89QU8"/>
<dbReference type="STRING" id="224911.AAV28_12145"/>
<dbReference type="EnsemblBacteria" id="BAC48291">
    <property type="protein sequence ID" value="BAC48291"/>
    <property type="gene ID" value="BAC48291"/>
</dbReference>
<dbReference type="GeneID" id="46490063"/>
<dbReference type="KEGG" id="bja:blr3026"/>
<dbReference type="PATRIC" id="fig|224911.44.peg.2653"/>
<dbReference type="eggNOG" id="COG0587">
    <property type="taxonomic scope" value="Bacteria"/>
</dbReference>
<dbReference type="HOGENOM" id="CLU_001600_4_0_5"/>
<dbReference type="InParanoid" id="Q89QU8"/>
<dbReference type="OrthoDB" id="9803237at2"/>
<dbReference type="PhylomeDB" id="Q89QU8"/>
<dbReference type="Proteomes" id="UP000002526">
    <property type="component" value="Chromosome"/>
</dbReference>
<dbReference type="GO" id="GO:0005737">
    <property type="term" value="C:cytoplasm"/>
    <property type="evidence" value="ECO:0007669"/>
    <property type="project" value="UniProtKB-SubCell"/>
</dbReference>
<dbReference type="GO" id="GO:0008408">
    <property type="term" value="F:3'-5' exonuclease activity"/>
    <property type="evidence" value="ECO:0007669"/>
    <property type="project" value="InterPro"/>
</dbReference>
<dbReference type="GO" id="GO:0003887">
    <property type="term" value="F:DNA-directed DNA polymerase activity"/>
    <property type="evidence" value="ECO:0000318"/>
    <property type="project" value="GO_Central"/>
</dbReference>
<dbReference type="GO" id="GO:0003676">
    <property type="term" value="F:nucleic acid binding"/>
    <property type="evidence" value="ECO:0007669"/>
    <property type="project" value="InterPro"/>
</dbReference>
<dbReference type="GO" id="GO:0006281">
    <property type="term" value="P:DNA repair"/>
    <property type="evidence" value="ECO:0007669"/>
    <property type="project" value="UniProtKB-UniRule"/>
</dbReference>
<dbReference type="GO" id="GO:0006260">
    <property type="term" value="P:DNA replication"/>
    <property type="evidence" value="ECO:0007669"/>
    <property type="project" value="UniProtKB-KW"/>
</dbReference>
<dbReference type="CDD" id="cd04485">
    <property type="entry name" value="DnaE_OBF"/>
    <property type="match status" value="1"/>
</dbReference>
<dbReference type="CDD" id="cd07434">
    <property type="entry name" value="PHP_PolIIIA_DnaE2"/>
    <property type="match status" value="1"/>
</dbReference>
<dbReference type="Gene3D" id="3.20.20.140">
    <property type="entry name" value="Metal-dependent hydrolases"/>
    <property type="match status" value="1"/>
</dbReference>
<dbReference type="Gene3D" id="2.40.50.140">
    <property type="entry name" value="Nucleic acid-binding proteins"/>
    <property type="match status" value="1"/>
</dbReference>
<dbReference type="HAMAP" id="MF_01902">
    <property type="entry name" value="DNApol_error_prone"/>
    <property type="match status" value="1"/>
</dbReference>
<dbReference type="InterPro" id="IPR011708">
    <property type="entry name" value="DNA_pol3_alpha_NTPase_dom"/>
</dbReference>
<dbReference type="InterPro" id="IPR040982">
    <property type="entry name" value="DNA_pol3_finger"/>
</dbReference>
<dbReference type="InterPro" id="IPR023073">
    <property type="entry name" value="DnaE2"/>
</dbReference>
<dbReference type="InterPro" id="IPR004805">
    <property type="entry name" value="DnaE2/DnaE/PolC"/>
</dbReference>
<dbReference type="InterPro" id="IPR029460">
    <property type="entry name" value="DNAPol_HHH"/>
</dbReference>
<dbReference type="InterPro" id="IPR012340">
    <property type="entry name" value="NA-bd_OB-fold"/>
</dbReference>
<dbReference type="InterPro" id="IPR004365">
    <property type="entry name" value="NA-bd_OB_tRNA"/>
</dbReference>
<dbReference type="InterPro" id="IPR004013">
    <property type="entry name" value="PHP_dom"/>
</dbReference>
<dbReference type="InterPro" id="IPR003141">
    <property type="entry name" value="Pol/His_phosphatase_N"/>
</dbReference>
<dbReference type="InterPro" id="IPR016195">
    <property type="entry name" value="Pol/histidinol_Pase-like"/>
</dbReference>
<dbReference type="NCBIfam" id="TIGR00594">
    <property type="entry name" value="polc"/>
    <property type="match status" value="1"/>
</dbReference>
<dbReference type="NCBIfam" id="NF004225">
    <property type="entry name" value="PRK05672.1"/>
    <property type="match status" value="1"/>
</dbReference>
<dbReference type="PANTHER" id="PTHR32294">
    <property type="entry name" value="DNA POLYMERASE III SUBUNIT ALPHA"/>
    <property type="match status" value="1"/>
</dbReference>
<dbReference type="PANTHER" id="PTHR32294:SF4">
    <property type="entry name" value="ERROR-PRONE DNA POLYMERASE"/>
    <property type="match status" value="1"/>
</dbReference>
<dbReference type="Pfam" id="PF07733">
    <property type="entry name" value="DNA_pol3_alpha"/>
    <property type="match status" value="1"/>
</dbReference>
<dbReference type="Pfam" id="PF17657">
    <property type="entry name" value="DNA_pol3_finger"/>
    <property type="match status" value="1"/>
</dbReference>
<dbReference type="Pfam" id="PF14579">
    <property type="entry name" value="HHH_6"/>
    <property type="match status" value="1"/>
</dbReference>
<dbReference type="Pfam" id="PF02811">
    <property type="entry name" value="PHP"/>
    <property type="match status" value="1"/>
</dbReference>
<dbReference type="Pfam" id="PF01336">
    <property type="entry name" value="tRNA_anti-codon"/>
    <property type="match status" value="1"/>
</dbReference>
<dbReference type="SMART" id="SM00481">
    <property type="entry name" value="POLIIIAc"/>
    <property type="match status" value="1"/>
</dbReference>
<dbReference type="SUPFAM" id="SSF89550">
    <property type="entry name" value="PHP domain-like"/>
    <property type="match status" value="1"/>
</dbReference>
<comment type="function">
    <text evidence="1">DNA polymerase involved in damage-induced mutagenesis and translesion synthesis (TLS). It is not the major replicative DNA polymerase.</text>
</comment>
<comment type="catalytic activity">
    <reaction evidence="1">
        <text>DNA(n) + a 2'-deoxyribonucleoside 5'-triphosphate = DNA(n+1) + diphosphate</text>
        <dbReference type="Rhea" id="RHEA:22508"/>
        <dbReference type="Rhea" id="RHEA-COMP:17339"/>
        <dbReference type="Rhea" id="RHEA-COMP:17340"/>
        <dbReference type="ChEBI" id="CHEBI:33019"/>
        <dbReference type="ChEBI" id="CHEBI:61560"/>
        <dbReference type="ChEBI" id="CHEBI:173112"/>
        <dbReference type="EC" id="2.7.7.7"/>
    </reaction>
</comment>
<comment type="subcellular location">
    <subcellularLocation>
        <location evidence="1">Cytoplasm</location>
    </subcellularLocation>
</comment>
<comment type="similarity">
    <text evidence="1">Belongs to the DNA polymerase type-C family. DnaE2 subfamily.</text>
</comment>
<sequence length="1151" mass="129582">MNTPAYAEIGITTNFSFLRGGSDPRAYVHQASILGISAIGIADHNTLAGVVRAYKELDNDKVLHKPKLLIGARIVFIDGTPDILVYPRDRAAYGRLCQLLTRGKRGDDVTRIEKGECRLTFSDLLAFSEGQLLVLTLPHRFEPAQALDVLAKLKATRAEGVWLAASLVHRGDDRRRLARLDDLATTAKVQLLATNEVLYHDPARRPLQDVLTCIREKTTIEAVGRKLEANAERFLKTPREMSRLFRDFPDAIAETMRFANKIDFSLDQLRYQYPDEPVPPGKTAQGHLEDLTWAGVDKYFAGKIDDKLRATLKKELALIAELKYAHYFLTVHDIVHYARSQNILCQGRGSAANSAVCYVLGITSVDPTKVDLLFERFISKERLEPPDIDVDFEHSRREEVMQYVYRRYGRHRAAIIATIIHYRPRSAIRDVGKALGLTEDVTAALADTVWGSWGSGLNDMQVKQAGLDPQNPMINLAVELATELIEFPRHLSQHVGGYVLTQDRLDTYVPIGNAAMDDRTFIEWDKDDVDALNMMKVDVLALGMLTCIRKCFDLIDQHKGERWVLASVPQDDPKVYDMLCDGESLGVFQVESRAQMNMLPRLKPRTFYDLVIEVAIVRPGPIQGDMVHPYLRRRNGQEKVNYPSPSPEHGPADELYKVLHKTKGVPLFQEQAMRIAIEAAKFTSEEANGLRRSMATFRNVGTIGKYEDKLIGNMVARGYDPNFARSCFDQIKGFGSYGFPESHAASFAQLVYISSWLKYHHPDAFCCGLLNSQPMGFYAPAQIVGDARKNGVEVRDIDVSYSFAQNTLEQGSGKYCAVRLGFRQIDGFHWLDEDEEHLKRSLLSFRGAPLGANPESIGPHMPGGMDSGLDAGASPRNDKKEDWANRIVAARNRRPFTSLEDFARDTGLPKRALILLADADAFRSLGLDRREALWQVRRLPDDVPLPLFEAATAREQPDEHAKPLPLMPRPEQVVADYQTIRLSLKGHPMEFLREMLSRERVVACKDVNHQNERRRVRCAGVVLVRQRPGSASGVVFMTLEDETGIANVVVWPKIMEQYRKEVMGARLILVEGYIQSSPEKVTHLIAQRMVDRSHDLIGLANDSLTRKHPVPSGDALIEPLNDDRRDHADAPAQKIRHPRNVRILPPSRDFH</sequence>
<protein>
    <recommendedName>
        <fullName evidence="1">Error-prone DNA polymerase</fullName>
        <ecNumber evidence="1">2.7.7.7</ecNumber>
    </recommendedName>
</protein>
<reference key="1">
    <citation type="journal article" date="2002" name="DNA Res.">
        <title>Complete genomic sequence of nitrogen-fixing symbiotic bacterium Bradyrhizobium japonicum USDA110.</title>
        <authorList>
            <person name="Kaneko T."/>
            <person name="Nakamura Y."/>
            <person name="Sato S."/>
            <person name="Minamisawa K."/>
            <person name="Uchiumi T."/>
            <person name="Sasamoto S."/>
            <person name="Watanabe A."/>
            <person name="Idesawa K."/>
            <person name="Iriguchi M."/>
            <person name="Kawashima K."/>
            <person name="Kohara M."/>
            <person name="Matsumoto M."/>
            <person name="Shimpo S."/>
            <person name="Tsuruoka H."/>
            <person name="Wada T."/>
            <person name="Yamada M."/>
            <person name="Tabata S."/>
        </authorList>
    </citation>
    <scope>NUCLEOTIDE SEQUENCE [LARGE SCALE GENOMIC DNA]</scope>
    <source>
        <strain>JCM 10833 / BCRC 13528 / IAM 13628 / NBRC 14792 / USDA 110</strain>
    </source>
</reference>
<name>DNAE2_BRADU</name>
<gene>
    <name evidence="1" type="primary">dnaE2</name>
    <name type="ordered locus">blr3026</name>
</gene>
<evidence type="ECO:0000255" key="1">
    <source>
        <dbReference type="HAMAP-Rule" id="MF_01902"/>
    </source>
</evidence>
<evidence type="ECO:0000256" key="2">
    <source>
        <dbReference type="SAM" id="MobiDB-lite"/>
    </source>
</evidence>
<feature type="chain" id="PRO_0000103369" description="Error-prone DNA polymerase">
    <location>
        <begin position="1"/>
        <end position="1151"/>
    </location>
</feature>
<feature type="region of interest" description="Disordered" evidence="2">
    <location>
        <begin position="1108"/>
        <end position="1151"/>
    </location>
</feature>
<keyword id="KW-0963">Cytoplasm</keyword>
<keyword id="KW-0227">DNA damage</keyword>
<keyword id="KW-0234">DNA repair</keyword>
<keyword id="KW-0235">DNA replication</keyword>
<keyword id="KW-0239">DNA-directed DNA polymerase</keyword>
<keyword id="KW-0548">Nucleotidyltransferase</keyword>
<keyword id="KW-1185">Reference proteome</keyword>
<keyword id="KW-0808">Transferase</keyword>
<accession>Q89QU8</accession>
<organism>
    <name type="scientific">Bradyrhizobium diazoefficiens (strain JCM 10833 / BCRC 13528 / IAM 13628 / NBRC 14792 / USDA 110)</name>
    <dbReference type="NCBI Taxonomy" id="224911"/>
    <lineage>
        <taxon>Bacteria</taxon>
        <taxon>Pseudomonadati</taxon>
        <taxon>Pseudomonadota</taxon>
        <taxon>Alphaproteobacteria</taxon>
        <taxon>Hyphomicrobiales</taxon>
        <taxon>Nitrobacteraceae</taxon>
        <taxon>Bradyrhizobium</taxon>
    </lineage>
</organism>
<proteinExistence type="inferred from homology"/>